<gene>
    <name evidence="1" type="primary">rsmG</name>
    <name type="ordered locus">Cgl3096</name>
    <name type="ordered locus">cg3428</name>
</gene>
<accession>Q8NL53</accession>
<feature type="chain" id="PRO_0000184242" description="Ribosomal RNA small subunit methyltransferase G">
    <location>
        <begin position="1"/>
        <end position="223"/>
    </location>
</feature>
<feature type="binding site" evidence="1">
    <location>
        <position position="82"/>
    </location>
    <ligand>
        <name>S-adenosyl-L-methionine</name>
        <dbReference type="ChEBI" id="CHEBI:59789"/>
    </ligand>
</feature>
<feature type="binding site" evidence="1">
    <location>
        <position position="87"/>
    </location>
    <ligand>
        <name>S-adenosyl-L-methionine</name>
        <dbReference type="ChEBI" id="CHEBI:59789"/>
    </ligand>
</feature>
<feature type="binding site" evidence="1">
    <location>
        <begin position="133"/>
        <end position="134"/>
    </location>
    <ligand>
        <name>S-adenosyl-L-methionine</name>
        <dbReference type="ChEBI" id="CHEBI:59789"/>
    </ligand>
</feature>
<feature type="binding site" evidence="1">
    <location>
        <position position="151"/>
    </location>
    <ligand>
        <name>S-adenosyl-L-methionine</name>
        <dbReference type="ChEBI" id="CHEBI:59789"/>
    </ligand>
</feature>
<proteinExistence type="inferred from homology"/>
<reference key="1">
    <citation type="journal article" date="2003" name="Appl. Microbiol. Biotechnol.">
        <title>The Corynebacterium glutamicum genome: features and impacts on biotechnological processes.</title>
        <authorList>
            <person name="Ikeda M."/>
            <person name="Nakagawa S."/>
        </authorList>
    </citation>
    <scope>NUCLEOTIDE SEQUENCE [LARGE SCALE GENOMIC DNA]</scope>
    <source>
        <strain>ATCC 13032 / DSM 20300 / JCM 1318 / BCRC 11384 / CCUG 27702 / LMG 3730 / NBRC 12168 / NCIMB 10025 / NRRL B-2784 / 534</strain>
    </source>
</reference>
<reference key="2">
    <citation type="journal article" date="2003" name="J. Biotechnol.">
        <title>The complete Corynebacterium glutamicum ATCC 13032 genome sequence and its impact on the production of L-aspartate-derived amino acids and vitamins.</title>
        <authorList>
            <person name="Kalinowski J."/>
            <person name="Bathe B."/>
            <person name="Bartels D."/>
            <person name="Bischoff N."/>
            <person name="Bott M."/>
            <person name="Burkovski A."/>
            <person name="Dusch N."/>
            <person name="Eggeling L."/>
            <person name="Eikmanns B.J."/>
            <person name="Gaigalat L."/>
            <person name="Goesmann A."/>
            <person name="Hartmann M."/>
            <person name="Huthmacher K."/>
            <person name="Kraemer R."/>
            <person name="Linke B."/>
            <person name="McHardy A.C."/>
            <person name="Meyer F."/>
            <person name="Moeckel B."/>
            <person name="Pfefferle W."/>
            <person name="Puehler A."/>
            <person name="Rey D.A."/>
            <person name="Rueckert C."/>
            <person name="Rupp O."/>
            <person name="Sahm H."/>
            <person name="Wendisch V.F."/>
            <person name="Wiegraebe I."/>
            <person name="Tauch A."/>
        </authorList>
    </citation>
    <scope>NUCLEOTIDE SEQUENCE [LARGE SCALE GENOMIC DNA]</scope>
    <source>
        <strain>ATCC 13032 / DSM 20300 / JCM 1318 / BCRC 11384 / CCUG 27702 / LMG 3730 / NBRC 12168 / NCIMB 10025 / NRRL B-2784 / 534</strain>
    </source>
</reference>
<evidence type="ECO:0000255" key="1">
    <source>
        <dbReference type="HAMAP-Rule" id="MF_00074"/>
    </source>
</evidence>
<evidence type="ECO:0000305" key="2"/>
<sequence>MLYRSISCPKGTFFMTTPPAAAEIFGDNLEKAIAYHESLATDGSVRGFIGPREVPRLWDRHILNCGVIGEAMDEGISVADIGSGAGLPGIPLAIARPDLNITLIEPLLKRSVYLNEVKEALNLDNVTVVRGRAEEKVVRKQVGLVDIVTSRAVAPLGKLATWSLPLVKIGGRMVAMKGSSVEEEIERDAKEIRKAGGTDIKVYTVGEALLSEPTTLISIRREK</sequence>
<organism>
    <name type="scientific">Corynebacterium glutamicum (strain ATCC 13032 / DSM 20300 / JCM 1318 / BCRC 11384 / CCUG 27702 / LMG 3730 / NBRC 12168 / NCIMB 10025 / NRRL B-2784 / 534)</name>
    <dbReference type="NCBI Taxonomy" id="196627"/>
    <lineage>
        <taxon>Bacteria</taxon>
        <taxon>Bacillati</taxon>
        <taxon>Actinomycetota</taxon>
        <taxon>Actinomycetes</taxon>
        <taxon>Mycobacteriales</taxon>
        <taxon>Corynebacteriaceae</taxon>
        <taxon>Corynebacterium</taxon>
    </lineage>
</organism>
<comment type="function">
    <text evidence="1">Specifically methylates the N7 position of guanine in position 518 of 16S rRNA.</text>
</comment>
<comment type="subcellular location">
    <subcellularLocation>
        <location evidence="1">Cytoplasm</location>
    </subcellularLocation>
</comment>
<comment type="similarity">
    <text evidence="1">Belongs to the methyltransferase superfamily. RNA methyltransferase RsmG family.</text>
</comment>
<comment type="sequence caution" evidence="2">
    <conflict type="erroneous initiation">
        <sequence resource="EMBL-CDS" id="CAF19035"/>
    </conflict>
</comment>
<keyword id="KW-0963">Cytoplasm</keyword>
<keyword id="KW-0489">Methyltransferase</keyword>
<keyword id="KW-1185">Reference proteome</keyword>
<keyword id="KW-0698">rRNA processing</keyword>
<keyword id="KW-0949">S-adenosyl-L-methionine</keyword>
<keyword id="KW-0808">Transferase</keyword>
<dbReference type="EC" id="2.1.1.-" evidence="1"/>
<dbReference type="EMBL" id="BA000036">
    <property type="protein sequence ID" value="BAC00490.1"/>
    <property type="molecule type" value="Genomic_DNA"/>
</dbReference>
<dbReference type="EMBL" id="BX927157">
    <property type="protein sequence ID" value="CAF19035.1"/>
    <property type="status" value="ALT_INIT"/>
    <property type="molecule type" value="Genomic_DNA"/>
</dbReference>
<dbReference type="RefSeq" id="NP_602288.2">
    <property type="nucleotide sequence ID" value="NC_003450.3"/>
</dbReference>
<dbReference type="SMR" id="Q8NL53"/>
<dbReference type="STRING" id="196627.cg3428"/>
<dbReference type="KEGG" id="cgb:cg3428"/>
<dbReference type="KEGG" id="cgl:Cgl3096"/>
<dbReference type="PATRIC" id="fig|196627.13.peg.3029"/>
<dbReference type="eggNOG" id="COG0357">
    <property type="taxonomic scope" value="Bacteria"/>
</dbReference>
<dbReference type="HOGENOM" id="CLU_065341_5_0_11"/>
<dbReference type="OrthoDB" id="9808773at2"/>
<dbReference type="BioCyc" id="CORYNE:G18NG-12717-MONOMER"/>
<dbReference type="Proteomes" id="UP000000582">
    <property type="component" value="Chromosome"/>
</dbReference>
<dbReference type="Proteomes" id="UP000001009">
    <property type="component" value="Chromosome"/>
</dbReference>
<dbReference type="GO" id="GO:0005829">
    <property type="term" value="C:cytosol"/>
    <property type="evidence" value="ECO:0007669"/>
    <property type="project" value="TreeGrafter"/>
</dbReference>
<dbReference type="GO" id="GO:0070043">
    <property type="term" value="F:rRNA (guanine-N7-)-methyltransferase activity"/>
    <property type="evidence" value="ECO:0007669"/>
    <property type="project" value="UniProtKB-UniRule"/>
</dbReference>
<dbReference type="Gene3D" id="3.40.50.150">
    <property type="entry name" value="Vaccinia Virus protein VP39"/>
    <property type="match status" value="1"/>
</dbReference>
<dbReference type="HAMAP" id="MF_00074">
    <property type="entry name" value="16SrRNA_methyltr_G"/>
    <property type="match status" value="1"/>
</dbReference>
<dbReference type="InterPro" id="IPR003682">
    <property type="entry name" value="rRNA_ssu_MeTfrase_G"/>
</dbReference>
<dbReference type="InterPro" id="IPR029063">
    <property type="entry name" value="SAM-dependent_MTases_sf"/>
</dbReference>
<dbReference type="NCBIfam" id="TIGR00138">
    <property type="entry name" value="rsmG_gidB"/>
    <property type="match status" value="1"/>
</dbReference>
<dbReference type="PANTHER" id="PTHR31760">
    <property type="entry name" value="S-ADENOSYL-L-METHIONINE-DEPENDENT METHYLTRANSFERASES SUPERFAMILY PROTEIN"/>
    <property type="match status" value="1"/>
</dbReference>
<dbReference type="PANTHER" id="PTHR31760:SF0">
    <property type="entry name" value="S-ADENOSYL-L-METHIONINE-DEPENDENT METHYLTRANSFERASES SUPERFAMILY PROTEIN"/>
    <property type="match status" value="1"/>
</dbReference>
<dbReference type="Pfam" id="PF02527">
    <property type="entry name" value="GidB"/>
    <property type="match status" value="1"/>
</dbReference>
<dbReference type="PIRSF" id="PIRSF003078">
    <property type="entry name" value="GidB"/>
    <property type="match status" value="1"/>
</dbReference>
<dbReference type="SUPFAM" id="SSF53335">
    <property type="entry name" value="S-adenosyl-L-methionine-dependent methyltransferases"/>
    <property type="match status" value="1"/>
</dbReference>
<name>RSMG_CORGL</name>
<protein>
    <recommendedName>
        <fullName evidence="1">Ribosomal RNA small subunit methyltransferase G</fullName>
        <ecNumber evidence="1">2.1.1.-</ecNumber>
    </recommendedName>
    <alternativeName>
        <fullName evidence="1">16S rRNA 7-methylguanosine methyltransferase</fullName>
        <shortName evidence="1">16S rRNA m7G methyltransferase</shortName>
    </alternativeName>
</protein>